<comment type="function">
    <text evidence="1">Has antimicrobial activity.</text>
</comment>
<comment type="subcellular location">
    <subcellularLocation>
        <location evidence="2">Secreted</location>
    </subcellularLocation>
</comment>
<comment type="tissue specificity">
    <text evidence="5">Expressed by the skin glands.</text>
</comment>
<comment type="mass spectrometry" mass="3127.6" method="MALDI" evidence="2"/>
<comment type="similarity">
    <text evidence="4">Belongs to the frog skin active peptide (FSAP) family. Dermaseptin subfamily.</text>
</comment>
<organism evidence="3">
    <name type="scientific">Phyllomedusa trinitatis</name>
    <name type="common">Trinidad leaf frog</name>
    <dbReference type="NCBI Taxonomy" id="332092"/>
    <lineage>
        <taxon>Eukaryota</taxon>
        <taxon>Metazoa</taxon>
        <taxon>Chordata</taxon>
        <taxon>Craniata</taxon>
        <taxon>Vertebrata</taxon>
        <taxon>Euteleostomi</taxon>
        <taxon>Amphibia</taxon>
        <taxon>Batrachia</taxon>
        <taxon>Anura</taxon>
        <taxon>Neobatrachia</taxon>
        <taxon>Hyloidea</taxon>
        <taxon>Hylidae</taxon>
        <taxon>Phyllomedusinae</taxon>
        <taxon>Phyllomedusa</taxon>
    </lineage>
</organism>
<dbReference type="SMR" id="C0HLC5"/>
<dbReference type="GO" id="GO:0005576">
    <property type="term" value="C:extracellular region"/>
    <property type="evidence" value="ECO:0007669"/>
    <property type="project" value="UniProtKB-SubCell"/>
</dbReference>
<dbReference type="GO" id="GO:0006952">
    <property type="term" value="P:defense response"/>
    <property type="evidence" value="ECO:0007669"/>
    <property type="project" value="UniProtKB-KW"/>
</dbReference>
<feature type="peptide" id="PRO_0000445213" description="Dermaseptin-3.1TR" evidence="2">
    <location>
        <begin position="1"/>
        <end position="30"/>
    </location>
</feature>
<accession>C0HLC5</accession>
<proteinExistence type="evidence at protein level"/>
<evidence type="ECO:0000250" key="1">
    <source>
        <dbReference type="UniProtKB" id="P84923"/>
    </source>
</evidence>
<evidence type="ECO:0000269" key="2">
    <source>
    </source>
</evidence>
<evidence type="ECO:0000303" key="3">
    <source>
    </source>
</evidence>
<evidence type="ECO:0000305" key="4"/>
<evidence type="ECO:0000305" key="5">
    <source>
    </source>
</evidence>
<keyword id="KW-0878">Amphibian defense peptide</keyword>
<keyword id="KW-0929">Antimicrobial</keyword>
<keyword id="KW-0903">Direct protein sequencing</keyword>
<keyword id="KW-0964">Secreted</keyword>
<protein>
    <recommendedName>
        <fullName evidence="3">Dermaseptin-3.1TR</fullName>
    </recommendedName>
</protein>
<name>DRS31_PHYTB</name>
<reference evidence="4" key="1">
    <citation type="journal article" date="2018" name="Comp. Biochem. Physiol.">
        <title>Peptidomic analysis of the host-defense peptides in skin secretions of the Trinidadian leaf frog Phyllomedusa trinitatis (Phyllomedusidae).</title>
        <authorList>
            <person name="Mechkarska M."/>
            <person name="Coquet L."/>
            <person name="Leprince J."/>
            <person name="Auguste R.J."/>
            <person name="Jouenne T."/>
            <person name="Mangoni M.L."/>
            <person name="Conlon J.M."/>
        </authorList>
    </citation>
    <scope>PROTEIN SEQUENCE</scope>
    <scope>SUBCELLULAR LOCATION</scope>
    <scope>MASS SPECTROMETRY</scope>
    <source>
        <tissue evidence="3">Skin secretion</tissue>
    </source>
</reference>
<sequence length="30" mass="3129">GLFKTLIKGAGKMLGHVAKQFLGSQGQPES</sequence>